<feature type="chain" id="PRO_1000136443" description="Replication restart protein DnaT">
    <location>
        <begin position="1"/>
        <end position="179"/>
    </location>
</feature>
<feature type="region of interest" description="Disordered" evidence="2">
    <location>
        <begin position="151"/>
        <end position="179"/>
    </location>
</feature>
<feature type="compositionally biased region" description="Polar residues" evidence="2">
    <location>
        <begin position="151"/>
        <end position="168"/>
    </location>
</feature>
<reference key="1">
    <citation type="journal article" date="2009" name="BMC Genomics">
        <title>Pseudogene accumulation in the evolutionary histories of Salmonella enterica serovars Paratyphi A and Typhi.</title>
        <authorList>
            <person name="Holt K.E."/>
            <person name="Thomson N.R."/>
            <person name="Wain J."/>
            <person name="Langridge G.C."/>
            <person name="Hasan R."/>
            <person name="Bhutta Z.A."/>
            <person name="Quail M.A."/>
            <person name="Norbertczak H."/>
            <person name="Walker D."/>
            <person name="Simmonds M."/>
            <person name="White B."/>
            <person name="Bason N."/>
            <person name="Mungall K."/>
            <person name="Dougan G."/>
            <person name="Parkhill J."/>
        </authorList>
    </citation>
    <scope>NUCLEOTIDE SEQUENCE [LARGE SCALE GENOMIC DNA]</scope>
    <source>
        <strain>AKU_12601</strain>
    </source>
</reference>
<evidence type="ECO:0000255" key="1">
    <source>
        <dbReference type="HAMAP-Rule" id="MF_01061"/>
    </source>
</evidence>
<evidence type="ECO:0000256" key="2">
    <source>
        <dbReference type="SAM" id="MobiDB-lite"/>
    </source>
</evidence>
<protein>
    <recommendedName>
        <fullName evidence="1">Replication restart protein DnaT</fullName>
    </recommendedName>
</protein>
<accession>B5BKZ8</accession>
<proteinExistence type="inferred from homology"/>
<comment type="function">
    <text evidence="1">Involved in the restart of stalled replication forks, which reloads the replicative helicase on sites other than the origin of replication. Can function in multiple replication restart pathways. Displaces ssDNA from a PriB-ssDNA complex. Probably forms a spiral filament on ssDNA.</text>
</comment>
<comment type="subunit">
    <text evidence="1">Homooligomerizes. Interacts with PriB. Component of the replication restart primosome. Primosome assembly occurs via a 'hand-off' mechanism. PriA binds to replication forks, subsequently PriB then DnaT bind; DnaT then displaces ssDNA to generate the helicase loading substrate.</text>
</comment>
<comment type="similarity">
    <text evidence="1">Belongs to the DnaT family.</text>
</comment>
<dbReference type="EMBL" id="FM200053">
    <property type="protein sequence ID" value="CAR62344.1"/>
    <property type="molecule type" value="Genomic_DNA"/>
</dbReference>
<dbReference type="RefSeq" id="WP_000098578.1">
    <property type="nucleotide sequence ID" value="NC_011147.1"/>
</dbReference>
<dbReference type="SMR" id="B5BKZ8"/>
<dbReference type="KEGG" id="sek:SSPA4047"/>
<dbReference type="HOGENOM" id="CLU_1501592_0_0_6"/>
<dbReference type="Proteomes" id="UP000001869">
    <property type="component" value="Chromosome"/>
</dbReference>
<dbReference type="GO" id="GO:1990077">
    <property type="term" value="C:primosome complex"/>
    <property type="evidence" value="ECO:0007669"/>
    <property type="project" value="UniProtKB-KW"/>
</dbReference>
<dbReference type="GO" id="GO:0006269">
    <property type="term" value="P:DNA replication, synthesis of primer"/>
    <property type="evidence" value="ECO:0007669"/>
    <property type="project" value="UniProtKB-UniRule"/>
</dbReference>
<dbReference type="Gene3D" id="1.10.8.1180">
    <property type="match status" value="1"/>
</dbReference>
<dbReference type="HAMAP" id="MF_01061">
    <property type="entry name" value="DnaT"/>
    <property type="match status" value="1"/>
</dbReference>
<dbReference type="InterPro" id="IPR020917">
    <property type="entry name" value="DnaT"/>
</dbReference>
<dbReference type="InterPro" id="IPR040480">
    <property type="entry name" value="DnaT_DNA_bind"/>
</dbReference>
<dbReference type="NCBIfam" id="NF002770">
    <property type="entry name" value="PRK02854.1"/>
    <property type="match status" value="1"/>
</dbReference>
<dbReference type="Pfam" id="PF17948">
    <property type="entry name" value="DnaT"/>
    <property type="match status" value="1"/>
</dbReference>
<sequence length="179" mass="19506">MSSRILTSDVIGIDVLLHDHHAVLAKSTGGAVAVFANNAPAFYAVTPARMAELLALEEKLSRPGSDVALDAQFYEEPEAAPVAIPCGKFAMYPAWQPDADFQRQAALWGVALREPVTAEELAAFIAYWQAEGKVFHHIQWQQKLARSVQISRSSNGGMPQRDINSVSEPDNHIPPGFRG</sequence>
<keyword id="KW-0235">DNA replication</keyword>
<keyword id="KW-0238">DNA-binding</keyword>
<keyword id="KW-0639">Primosome</keyword>
<gene>
    <name evidence="1" type="primary">dnaT</name>
    <name type="ordered locus">SSPA4047</name>
</gene>
<organism>
    <name type="scientific">Salmonella paratyphi A (strain AKU_12601)</name>
    <dbReference type="NCBI Taxonomy" id="554290"/>
    <lineage>
        <taxon>Bacteria</taxon>
        <taxon>Pseudomonadati</taxon>
        <taxon>Pseudomonadota</taxon>
        <taxon>Gammaproteobacteria</taxon>
        <taxon>Enterobacterales</taxon>
        <taxon>Enterobacteriaceae</taxon>
        <taxon>Salmonella</taxon>
    </lineage>
</organism>
<name>DNAT_SALPK</name>